<sequence>MKNNKIKIKSSNLNVHYGEKQALFDVDLDIYDKEVTALIGPSGCGKSTFIRCINRMNDVIDICKVEGSITIDDEEIIDKNLDVVGLREKIGMVFQKPNPFPKSIYDNISYGPTIHGLTENKTDMDEIVENSLKKAALWNEVKDRLNEAGTGLSGGQQQRLCIARAISVNPQVILMDEPCSALDPIATAKIEELIDELKKSYTIVIVTHSMSQAVRVSQRTGFFHLGKIIEVDTTEKIFKNPGNKMTQDYITGRFG</sequence>
<keyword id="KW-0067">ATP-binding</keyword>
<keyword id="KW-0997">Cell inner membrane</keyword>
<keyword id="KW-1003">Cell membrane</keyword>
<keyword id="KW-0472">Membrane</keyword>
<keyword id="KW-0547">Nucleotide-binding</keyword>
<keyword id="KW-0592">Phosphate transport</keyword>
<keyword id="KW-1185">Reference proteome</keyword>
<keyword id="KW-1278">Translocase</keyword>
<keyword id="KW-0813">Transport</keyword>
<evidence type="ECO:0000255" key="1">
    <source>
        <dbReference type="HAMAP-Rule" id="MF_01702"/>
    </source>
</evidence>
<protein>
    <recommendedName>
        <fullName evidence="1">Phosphate import ATP-binding protein PstB</fullName>
        <ecNumber evidence="1">7.3.2.1</ecNumber>
    </recommendedName>
    <alternativeName>
        <fullName evidence="1">ABC phosphate transporter</fullName>
    </alternativeName>
    <alternativeName>
        <fullName evidence="1">Phosphate-transporting ATPase</fullName>
    </alternativeName>
</protein>
<proteinExistence type="inferred from homology"/>
<feature type="chain" id="PRO_0000272488" description="Phosphate import ATP-binding protein PstB">
    <location>
        <begin position="1"/>
        <end position="255"/>
    </location>
</feature>
<feature type="domain" description="ABC transporter" evidence="1">
    <location>
        <begin position="8"/>
        <end position="250"/>
    </location>
</feature>
<feature type="binding site" evidence="1">
    <location>
        <begin position="40"/>
        <end position="47"/>
    </location>
    <ligand>
        <name>ATP</name>
        <dbReference type="ChEBI" id="CHEBI:30616"/>
    </ligand>
</feature>
<reference key="1">
    <citation type="journal article" date="2005" name="Science">
        <title>Genome streamlining in a cosmopolitan oceanic bacterium.</title>
        <authorList>
            <person name="Giovannoni S.J."/>
            <person name="Tripp H.J."/>
            <person name="Givan S."/>
            <person name="Podar M."/>
            <person name="Vergin K.L."/>
            <person name="Baptista D."/>
            <person name="Bibbs L."/>
            <person name="Eads J."/>
            <person name="Richardson T.H."/>
            <person name="Noordewier M."/>
            <person name="Rappe M.S."/>
            <person name="Short J.M."/>
            <person name="Carrington J.C."/>
            <person name="Mathur E.J."/>
        </authorList>
    </citation>
    <scope>NUCLEOTIDE SEQUENCE [LARGE SCALE GENOMIC DNA]</scope>
    <source>
        <strain>HTCC1062</strain>
    </source>
</reference>
<organism>
    <name type="scientific">Pelagibacter ubique (strain HTCC1062)</name>
    <dbReference type="NCBI Taxonomy" id="335992"/>
    <lineage>
        <taxon>Bacteria</taxon>
        <taxon>Pseudomonadati</taxon>
        <taxon>Pseudomonadota</taxon>
        <taxon>Alphaproteobacteria</taxon>
        <taxon>Candidatus Pelagibacterales</taxon>
        <taxon>Candidatus Pelagibacteraceae</taxon>
        <taxon>Candidatus Pelagibacter</taxon>
    </lineage>
</organism>
<dbReference type="EC" id="7.3.2.1" evidence="1"/>
<dbReference type="EMBL" id="CP000084">
    <property type="protein sequence ID" value="AAZ21982.1"/>
    <property type="molecule type" value="Genomic_DNA"/>
</dbReference>
<dbReference type="RefSeq" id="WP_011282193.1">
    <property type="nucleotide sequence ID" value="NC_007205.1"/>
</dbReference>
<dbReference type="SMR" id="Q4FLF6"/>
<dbReference type="STRING" id="335992.SAR11_1176"/>
<dbReference type="GeneID" id="66295672"/>
<dbReference type="KEGG" id="pub:SAR11_1176"/>
<dbReference type="eggNOG" id="COG1117">
    <property type="taxonomic scope" value="Bacteria"/>
</dbReference>
<dbReference type="HOGENOM" id="CLU_000604_1_22_5"/>
<dbReference type="OrthoDB" id="9802264at2"/>
<dbReference type="Proteomes" id="UP000002528">
    <property type="component" value="Chromosome"/>
</dbReference>
<dbReference type="GO" id="GO:0005886">
    <property type="term" value="C:plasma membrane"/>
    <property type="evidence" value="ECO:0007669"/>
    <property type="project" value="UniProtKB-SubCell"/>
</dbReference>
<dbReference type="GO" id="GO:0005524">
    <property type="term" value="F:ATP binding"/>
    <property type="evidence" value="ECO:0007669"/>
    <property type="project" value="UniProtKB-KW"/>
</dbReference>
<dbReference type="GO" id="GO:0016887">
    <property type="term" value="F:ATP hydrolysis activity"/>
    <property type="evidence" value="ECO:0007669"/>
    <property type="project" value="InterPro"/>
</dbReference>
<dbReference type="GO" id="GO:0015415">
    <property type="term" value="F:ATPase-coupled phosphate ion transmembrane transporter activity"/>
    <property type="evidence" value="ECO:0007669"/>
    <property type="project" value="UniProtKB-EC"/>
</dbReference>
<dbReference type="GO" id="GO:0035435">
    <property type="term" value="P:phosphate ion transmembrane transport"/>
    <property type="evidence" value="ECO:0007669"/>
    <property type="project" value="InterPro"/>
</dbReference>
<dbReference type="CDD" id="cd03260">
    <property type="entry name" value="ABC_PstB_phosphate_transporter"/>
    <property type="match status" value="1"/>
</dbReference>
<dbReference type="Gene3D" id="3.40.50.300">
    <property type="entry name" value="P-loop containing nucleotide triphosphate hydrolases"/>
    <property type="match status" value="1"/>
</dbReference>
<dbReference type="InterPro" id="IPR003593">
    <property type="entry name" value="AAA+_ATPase"/>
</dbReference>
<dbReference type="InterPro" id="IPR003439">
    <property type="entry name" value="ABC_transporter-like_ATP-bd"/>
</dbReference>
<dbReference type="InterPro" id="IPR017871">
    <property type="entry name" value="ABC_transporter-like_CS"/>
</dbReference>
<dbReference type="InterPro" id="IPR027417">
    <property type="entry name" value="P-loop_NTPase"/>
</dbReference>
<dbReference type="InterPro" id="IPR005670">
    <property type="entry name" value="PstB-like"/>
</dbReference>
<dbReference type="NCBIfam" id="TIGR00972">
    <property type="entry name" value="3a0107s01c2"/>
    <property type="match status" value="1"/>
</dbReference>
<dbReference type="PANTHER" id="PTHR43423">
    <property type="entry name" value="ABC TRANSPORTER I FAMILY MEMBER 17"/>
    <property type="match status" value="1"/>
</dbReference>
<dbReference type="PANTHER" id="PTHR43423:SF1">
    <property type="entry name" value="ABC TRANSPORTER I FAMILY MEMBER 17"/>
    <property type="match status" value="1"/>
</dbReference>
<dbReference type="Pfam" id="PF00005">
    <property type="entry name" value="ABC_tran"/>
    <property type="match status" value="1"/>
</dbReference>
<dbReference type="SMART" id="SM00382">
    <property type="entry name" value="AAA"/>
    <property type="match status" value="1"/>
</dbReference>
<dbReference type="SUPFAM" id="SSF52540">
    <property type="entry name" value="P-loop containing nucleoside triphosphate hydrolases"/>
    <property type="match status" value="1"/>
</dbReference>
<dbReference type="PROSITE" id="PS00211">
    <property type="entry name" value="ABC_TRANSPORTER_1"/>
    <property type="match status" value="1"/>
</dbReference>
<dbReference type="PROSITE" id="PS50893">
    <property type="entry name" value="ABC_TRANSPORTER_2"/>
    <property type="match status" value="1"/>
</dbReference>
<dbReference type="PROSITE" id="PS51238">
    <property type="entry name" value="PSTB"/>
    <property type="match status" value="1"/>
</dbReference>
<gene>
    <name evidence="1" type="primary">pstB</name>
    <name type="ordered locus">SAR11_1176</name>
</gene>
<name>PSTB_PELUB</name>
<comment type="function">
    <text evidence="1">Part of the ABC transporter complex PstSACB involved in phosphate import. Responsible for energy coupling to the transport system.</text>
</comment>
<comment type="catalytic activity">
    <reaction evidence="1">
        <text>phosphate(out) + ATP + H2O = ADP + 2 phosphate(in) + H(+)</text>
        <dbReference type="Rhea" id="RHEA:24440"/>
        <dbReference type="ChEBI" id="CHEBI:15377"/>
        <dbReference type="ChEBI" id="CHEBI:15378"/>
        <dbReference type="ChEBI" id="CHEBI:30616"/>
        <dbReference type="ChEBI" id="CHEBI:43474"/>
        <dbReference type="ChEBI" id="CHEBI:456216"/>
        <dbReference type="EC" id="7.3.2.1"/>
    </reaction>
</comment>
<comment type="subunit">
    <text evidence="1">The complex is composed of two ATP-binding proteins (PstB), two transmembrane proteins (PstC and PstA) and a solute-binding protein (PstS).</text>
</comment>
<comment type="subcellular location">
    <subcellularLocation>
        <location evidence="1">Cell inner membrane</location>
        <topology evidence="1">Peripheral membrane protein</topology>
    </subcellularLocation>
</comment>
<comment type="similarity">
    <text evidence="1">Belongs to the ABC transporter superfamily. Phosphate importer (TC 3.A.1.7) family.</text>
</comment>
<accession>Q4FLF6</accession>